<protein>
    <recommendedName>
        <fullName evidence="1">UPF0371 protein CLK_3516</fullName>
    </recommendedName>
</protein>
<proteinExistence type="inferred from homology"/>
<reference key="1">
    <citation type="journal article" date="2007" name="PLoS ONE">
        <title>Analysis of the neurotoxin complex genes in Clostridium botulinum A1-A4 and B1 strains: BoNT/A3, /Ba4 and /B1 clusters are located within plasmids.</title>
        <authorList>
            <person name="Smith T.J."/>
            <person name="Hill K.K."/>
            <person name="Foley B.T."/>
            <person name="Detter J.C."/>
            <person name="Munk A.C."/>
            <person name="Bruce D.C."/>
            <person name="Doggett N.A."/>
            <person name="Smith L.A."/>
            <person name="Marks J.D."/>
            <person name="Xie G."/>
            <person name="Brettin T.S."/>
        </authorList>
    </citation>
    <scope>NUCLEOTIDE SEQUENCE [LARGE SCALE GENOMIC DNA]</scope>
    <source>
        <strain>Loch Maree / Type A3</strain>
    </source>
</reference>
<feature type="chain" id="PRO_1000199741" description="UPF0371 protein CLK_3516">
    <location>
        <begin position="1"/>
        <end position="502"/>
    </location>
</feature>
<gene>
    <name type="ordered locus">CLK_3516</name>
</gene>
<accession>B1KUD0</accession>
<organism>
    <name type="scientific">Clostridium botulinum (strain Loch Maree / Type A3)</name>
    <dbReference type="NCBI Taxonomy" id="498214"/>
    <lineage>
        <taxon>Bacteria</taxon>
        <taxon>Bacillati</taxon>
        <taxon>Bacillota</taxon>
        <taxon>Clostridia</taxon>
        <taxon>Eubacteriales</taxon>
        <taxon>Clostridiaceae</taxon>
        <taxon>Clostridium</taxon>
    </lineage>
</organism>
<name>Y3516_CLOBM</name>
<comment type="similarity">
    <text evidence="1">Belongs to the UPF0371 family.</text>
</comment>
<sequence length="502" mass="56666">MRIGFDHEKYLEEQSKYILERVNNYDKLYLEFGGKLLFDLHAKRVLPGFDENAKIKLLHKLKEKVEIIICLYAGDIERNKIRGDFGITYDVDVLRLIDDLRGYDLEVNSVVITRYSGQPATNIFINKLERRGIKVYKHEATKGYPTDVDTIVSDEGYGKNPYIETTKPIVVVTAPGPGSGKLATCLSQLYHEYKRGNVAGYSKFETFPVWNVPLKHPLNIAYESATVDLKDVNMIDSFHFDAYNKVAVNYNRDIESFPVLKRIIEKITGEESVYKSPTDMGVNRVGFGIVDDEVVKEASKQEIIRRAFKTACEYKKGYVDKETFHRAKLIMEEMNLKEEDRKVVIPAREYAAKLKERANKSETCTVVALELEDGTILTGRSSELMDGTAAVILNAVKHYANISDEIHLISPVILEPIINLKAKTLGSKRTALSCEEVLIALSICAATNPTAQVAMGKLPMLKGCQAHSTTILSTNEEQTFRKLGIDVTCDPEYISESLYYNN</sequence>
<dbReference type="EMBL" id="CP000962">
    <property type="protein sequence ID" value="ACA55947.1"/>
    <property type="molecule type" value="Genomic_DNA"/>
</dbReference>
<dbReference type="RefSeq" id="WP_012343864.1">
    <property type="nucleotide sequence ID" value="NC_010520.1"/>
</dbReference>
<dbReference type="SMR" id="B1KUD0"/>
<dbReference type="KEGG" id="cbl:CLK_3516"/>
<dbReference type="HOGENOM" id="CLU_046981_0_0_9"/>
<dbReference type="Gene3D" id="1.20.1570.10">
    <property type="entry name" value="dip2346 domain like"/>
    <property type="match status" value="1"/>
</dbReference>
<dbReference type="Gene3D" id="3.10.630.10">
    <property type="entry name" value="dip2346 domain like"/>
    <property type="match status" value="1"/>
</dbReference>
<dbReference type="Gene3D" id="3.40.140.40">
    <property type="entry name" value="Domain of unknown function (DUF1846), C-terminal subdomain"/>
    <property type="match status" value="1"/>
</dbReference>
<dbReference type="HAMAP" id="MF_01567">
    <property type="entry name" value="UPF0371"/>
    <property type="match status" value="1"/>
</dbReference>
<dbReference type="InterPro" id="IPR014999">
    <property type="entry name" value="DUF1846"/>
</dbReference>
<dbReference type="InterPro" id="IPR048441">
    <property type="entry name" value="DUF1846_C"/>
</dbReference>
<dbReference type="InterPro" id="IPR048496">
    <property type="entry name" value="DUF1846_N"/>
</dbReference>
<dbReference type="NCBIfam" id="NF010184">
    <property type="entry name" value="PRK13663.1"/>
    <property type="match status" value="1"/>
</dbReference>
<dbReference type="Pfam" id="PF08903">
    <property type="entry name" value="DUF1846"/>
    <property type="match status" value="1"/>
</dbReference>
<dbReference type="Pfam" id="PF20921">
    <property type="entry name" value="DUF1846_C"/>
    <property type="match status" value="1"/>
</dbReference>
<dbReference type="PIRSF" id="PIRSF033132">
    <property type="entry name" value="DUF1846"/>
    <property type="match status" value="1"/>
</dbReference>
<evidence type="ECO:0000255" key="1">
    <source>
        <dbReference type="HAMAP-Rule" id="MF_01567"/>
    </source>
</evidence>